<gene>
    <name evidence="1" type="primary">yccT</name>
    <name type="ordered locus">ECIAI39_2182</name>
</gene>
<sequence length="220" mass="24594">MKTGIVTTLIALCLPVSVFATTLRLSTDVDLLVLDGKKVSSSLLRGADSIELDNGPHQLVFRVEKTIHLSNSEERLYISPPLVVSFNTQLINQVNFRLPRLENEREANHFDAAPRLELLDGDATPIPVKLDILAITSTAKTIDYEVEVERYNKSAKRASLPQFATMMADDSTLLSGVSELDAIPPQSQVLTEQRLKYWFKLADPQTRNTFLQWAEKQPSS</sequence>
<accession>B7NLF3</accession>
<protein>
    <recommendedName>
        <fullName evidence="1">UPF0319 protein YccT</fullName>
    </recommendedName>
</protein>
<keyword id="KW-0732">Signal</keyword>
<dbReference type="EMBL" id="CU928164">
    <property type="protein sequence ID" value="CAR18309.1"/>
    <property type="molecule type" value="Genomic_DNA"/>
</dbReference>
<dbReference type="RefSeq" id="WP_000847791.1">
    <property type="nucleotide sequence ID" value="NC_011750.1"/>
</dbReference>
<dbReference type="RefSeq" id="YP_002408145.1">
    <property type="nucleotide sequence ID" value="NC_011750.1"/>
</dbReference>
<dbReference type="STRING" id="585057.ECIAI39_2182"/>
<dbReference type="KEGG" id="ect:ECIAI39_2182"/>
<dbReference type="PATRIC" id="fig|585057.6.peg.2273"/>
<dbReference type="HOGENOM" id="CLU_073782_2_0_6"/>
<dbReference type="Proteomes" id="UP000000749">
    <property type="component" value="Chromosome"/>
</dbReference>
<dbReference type="HAMAP" id="MF_00789">
    <property type="entry name" value="UPF0319"/>
    <property type="match status" value="1"/>
</dbReference>
<dbReference type="InterPro" id="IPR018635">
    <property type="entry name" value="UPF0319"/>
</dbReference>
<dbReference type="NCBIfam" id="NF047712">
    <property type="entry name" value="CrliSynInhib"/>
    <property type="match status" value="1"/>
</dbReference>
<dbReference type="NCBIfam" id="NF002967">
    <property type="entry name" value="PRK03641.1"/>
    <property type="match status" value="1"/>
</dbReference>
<dbReference type="PANTHER" id="PTHR38108">
    <property type="entry name" value="UPF0319 PROTEIN YCCT"/>
    <property type="match status" value="1"/>
</dbReference>
<dbReference type="PANTHER" id="PTHR38108:SF1">
    <property type="entry name" value="UPF0319 PROTEIN YCCT"/>
    <property type="match status" value="1"/>
</dbReference>
<dbReference type="Pfam" id="PF09829">
    <property type="entry name" value="DUF2057"/>
    <property type="match status" value="1"/>
</dbReference>
<feature type="signal peptide" evidence="1">
    <location>
        <begin position="1"/>
        <end position="20"/>
    </location>
</feature>
<feature type="chain" id="PRO_1000200489" description="UPF0319 protein YccT">
    <location>
        <begin position="21"/>
        <end position="220"/>
    </location>
</feature>
<name>YCCT_ECO7I</name>
<comment type="similarity">
    <text evidence="1">Belongs to the UPF0319 family.</text>
</comment>
<organism>
    <name type="scientific">Escherichia coli O7:K1 (strain IAI39 / ExPEC)</name>
    <dbReference type="NCBI Taxonomy" id="585057"/>
    <lineage>
        <taxon>Bacteria</taxon>
        <taxon>Pseudomonadati</taxon>
        <taxon>Pseudomonadota</taxon>
        <taxon>Gammaproteobacteria</taxon>
        <taxon>Enterobacterales</taxon>
        <taxon>Enterobacteriaceae</taxon>
        <taxon>Escherichia</taxon>
    </lineage>
</organism>
<reference key="1">
    <citation type="journal article" date="2009" name="PLoS Genet.">
        <title>Organised genome dynamics in the Escherichia coli species results in highly diverse adaptive paths.</title>
        <authorList>
            <person name="Touchon M."/>
            <person name="Hoede C."/>
            <person name="Tenaillon O."/>
            <person name="Barbe V."/>
            <person name="Baeriswyl S."/>
            <person name="Bidet P."/>
            <person name="Bingen E."/>
            <person name="Bonacorsi S."/>
            <person name="Bouchier C."/>
            <person name="Bouvet O."/>
            <person name="Calteau A."/>
            <person name="Chiapello H."/>
            <person name="Clermont O."/>
            <person name="Cruveiller S."/>
            <person name="Danchin A."/>
            <person name="Diard M."/>
            <person name="Dossat C."/>
            <person name="Karoui M.E."/>
            <person name="Frapy E."/>
            <person name="Garry L."/>
            <person name="Ghigo J.M."/>
            <person name="Gilles A.M."/>
            <person name="Johnson J."/>
            <person name="Le Bouguenec C."/>
            <person name="Lescat M."/>
            <person name="Mangenot S."/>
            <person name="Martinez-Jehanne V."/>
            <person name="Matic I."/>
            <person name="Nassif X."/>
            <person name="Oztas S."/>
            <person name="Petit M.A."/>
            <person name="Pichon C."/>
            <person name="Rouy Z."/>
            <person name="Ruf C.S."/>
            <person name="Schneider D."/>
            <person name="Tourret J."/>
            <person name="Vacherie B."/>
            <person name="Vallenet D."/>
            <person name="Medigue C."/>
            <person name="Rocha E.P.C."/>
            <person name="Denamur E."/>
        </authorList>
    </citation>
    <scope>NUCLEOTIDE SEQUENCE [LARGE SCALE GENOMIC DNA]</scope>
    <source>
        <strain>IAI39 / ExPEC</strain>
    </source>
</reference>
<proteinExistence type="inferred from homology"/>
<evidence type="ECO:0000255" key="1">
    <source>
        <dbReference type="HAMAP-Rule" id="MF_00789"/>
    </source>
</evidence>